<comment type="catalytic activity">
    <reaction evidence="1">
        <text>5-amino-1-(5-phospho-D-ribosyl)imidazole-4-carboxylate + L-aspartate + ATP = (2S)-2-[5-amino-1-(5-phospho-beta-D-ribosyl)imidazole-4-carboxamido]succinate + ADP + phosphate + 2 H(+)</text>
        <dbReference type="Rhea" id="RHEA:22628"/>
        <dbReference type="ChEBI" id="CHEBI:15378"/>
        <dbReference type="ChEBI" id="CHEBI:29991"/>
        <dbReference type="ChEBI" id="CHEBI:30616"/>
        <dbReference type="ChEBI" id="CHEBI:43474"/>
        <dbReference type="ChEBI" id="CHEBI:58443"/>
        <dbReference type="ChEBI" id="CHEBI:77657"/>
        <dbReference type="ChEBI" id="CHEBI:456216"/>
        <dbReference type="EC" id="6.3.2.6"/>
    </reaction>
</comment>
<comment type="pathway">
    <text evidence="1">Purine metabolism; IMP biosynthesis via de novo pathway; 5-amino-1-(5-phospho-D-ribosyl)imidazole-4-carboxamide from 5-amino-1-(5-phospho-D-ribosyl)imidazole-4-carboxylate: step 1/2.</text>
</comment>
<comment type="similarity">
    <text evidence="1">Belongs to the SAICAR synthetase family.</text>
</comment>
<evidence type="ECO:0000255" key="1">
    <source>
        <dbReference type="HAMAP-Rule" id="MF_00137"/>
    </source>
</evidence>
<feature type="chain" id="PRO_1000096003" description="Phosphoribosylaminoimidazole-succinocarboxamide synthase">
    <location>
        <begin position="1"/>
        <end position="243"/>
    </location>
</feature>
<dbReference type="EC" id="6.3.2.6" evidence="1"/>
<dbReference type="EMBL" id="CP000878">
    <property type="protein sequence ID" value="ABX09324.1"/>
    <property type="molecule type" value="Genomic_DNA"/>
</dbReference>
<dbReference type="RefSeq" id="WP_012195945.1">
    <property type="nucleotide sequence ID" value="NC_009976.1"/>
</dbReference>
<dbReference type="SMR" id="A9BBW2"/>
<dbReference type="STRING" id="93059.P9211_13931"/>
<dbReference type="KEGG" id="pmj:P9211_13931"/>
<dbReference type="eggNOG" id="COG0152">
    <property type="taxonomic scope" value="Bacteria"/>
</dbReference>
<dbReference type="HOGENOM" id="CLU_061495_2_0_3"/>
<dbReference type="OrthoDB" id="9801549at2"/>
<dbReference type="UniPathway" id="UPA00074">
    <property type="reaction ID" value="UER00131"/>
</dbReference>
<dbReference type="Proteomes" id="UP000000788">
    <property type="component" value="Chromosome"/>
</dbReference>
<dbReference type="GO" id="GO:0005524">
    <property type="term" value="F:ATP binding"/>
    <property type="evidence" value="ECO:0007669"/>
    <property type="project" value="UniProtKB-KW"/>
</dbReference>
<dbReference type="GO" id="GO:0004639">
    <property type="term" value="F:phosphoribosylaminoimidazolesuccinocarboxamide synthase activity"/>
    <property type="evidence" value="ECO:0007669"/>
    <property type="project" value="UniProtKB-UniRule"/>
</dbReference>
<dbReference type="GO" id="GO:0006189">
    <property type="term" value="P:'de novo' IMP biosynthetic process"/>
    <property type="evidence" value="ECO:0007669"/>
    <property type="project" value="UniProtKB-UniRule"/>
</dbReference>
<dbReference type="GO" id="GO:0009236">
    <property type="term" value="P:cobalamin biosynthetic process"/>
    <property type="evidence" value="ECO:0007669"/>
    <property type="project" value="InterPro"/>
</dbReference>
<dbReference type="CDD" id="cd01415">
    <property type="entry name" value="SAICAR_synt_PurC"/>
    <property type="match status" value="1"/>
</dbReference>
<dbReference type="FunFam" id="3.30.470.20:FF:000006">
    <property type="entry name" value="Phosphoribosylaminoimidazole-succinocarboxamide synthase"/>
    <property type="match status" value="1"/>
</dbReference>
<dbReference type="Gene3D" id="3.30.470.20">
    <property type="entry name" value="ATP-grasp fold, B domain"/>
    <property type="match status" value="1"/>
</dbReference>
<dbReference type="Gene3D" id="3.30.200.20">
    <property type="entry name" value="Phosphorylase Kinase, domain 1"/>
    <property type="match status" value="1"/>
</dbReference>
<dbReference type="HAMAP" id="MF_00137">
    <property type="entry name" value="SAICAR_synth"/>
    <property type="match status" value="1"/>
</dbReference>
<dbReference type="InterPro" id="IPR028923">
    <property type="entry name" value="SAICAR_synt/ADE2_N"/>
</dbReference>
<dbReference type="InterPro" id="IPR033934">
    <property type="entry name" value="SAICAR_synt_PurC"/>
</dbReference>
<dbReference type="InterPro" id="IPR001636">
    <property type="entry name" value="SAICAR_synth"/>
</dbReference>
<dbReference type="InterPro" id="IPR050089">
    <property type="entry name" value="SAICAR_synthetase"/>
</dbReference>
<dbReference type="NCBIfam" id="TIGR00081">
    <property type="entry name" value="purC"/>
    <property type="match status" value="1"/>
</dbReference>
<dbReference type="PANTHER" id="PTHR43599">
    <property type="entry name" value="MULTIFUNCTIONAL PROTEIN ADE2"/>
    <property type="match status" value="1"/>
</dbReference>
<dbReference type="PANTHER" id="PTHR43599:SF3">
    <property type="entry name" value="SI:DKEY-6E2.2"/>
    <property type="match status" value="1"/>
</dbReference>
<dbReference type="Pfam" id="PF01259">
    <property type="entry name" value="SAICAR_synt"/>
    <property type="match status" value="1"/>
</dbReference>
<dbReference type="SUPFAM" id="SSF56104">
    <property type="entry name" value="SAICAR synthase-like"/>
    <property type="match status" value="1"/>
</dbReference>
<name>PUR7_PROM4</name>
<gene>
    <name evidence="1" type="primary">purC</name>
    <name type="ordered locus">P9211_13931</name>
</gene>
<keyword id="KW-0067">ATP-binding</keyword>
<keyword id="KW-0436">Ligase</keyword>
<keyword id="KW-0547">Nucleotide-binding</keyword>
<keyword id="KW-0658">Purine biosynthesis</keyword>
<keyword id="KW-1185">Reference proteome</keyword>
<accession>A9BBW2</accession>
<reference key="1">
    <citation type="journal article" date="2007" name="PLoS Genet.">
        <title>Patterns and implications of gene gain and loss in the evolution of Prochlorococcus.</title>
        <authorList>
            <person name="Kettler G.C."/>
            <person name="Martiny A.C."/>
            <person name="Huang K."/>
            <person name="Zucker J."/>
            <person name="Coleman M.L."/>
            <person name="Rodrigue S."/>
            <person name="Chen F."/>
            <person name="Lapidus A."/>
            <person name="Ferriera S."/>
            <person name="Johnson J."/>
            <person name="Steglich C."/>
            <person name="Church G.M."/>
            <person name="Richardson P."/>
            <person name="Chisholm S.W."/>
        </authorList>
    </citation>
    <scope>NUCLEOTIDE SEQUENCE [LARGE SCALE GENOMIC DNA]</scope>
    <source>
        <strain>MIT 9211</strain>
    </source>
</reference>
<organism>
    <name type="scientific">Prochlorococcus marinus (strain MIT 9211)</name>
    <dbReference type="NCBI Taxonomy" id="93059"/>
    <lineage>
        <taxon>Bacteria</taxon>
        <taxon>Bacillati</taxon>
        <taxon>Cyanobacteriota</taxon>
        <taxon>Cyanophyceae</taxon>
        <taxon>Synechococcales</taxon>
        <taxon>Prochlorococcaceae</taxon>
        <taxon>Prochlorococcus</taxon>
    </lineage>
</organism>
<protein>
    <recommendedName>
        <fullName evidence="1">Phosphoribosylaminoimidazole-succinocarboxamide synthase</fullName>
        <ecNumber evidence="1">6.3.2.6</ecNumber>
    </recommendedName>
    <alternativeName>
        <fullName evidence="1">SAICAR synthetase</fullName>
    </alternativeName>
</protein>
<sequence length="243" mass="27427">MKKQPGSFLFDGKAKTIFTTDKPYELLVHFKNDATAFNALKHAELEGKGKLNCQISASLFQLLEKEGVPTHFLGVQDETWMLVQKVDVIPLEIVVRNIACGSLCKETPLERGEKLSSPLLDFYYKDDQLGDPLLTDARLNLLGLTTSGQRLEIQSIAFKVNNILKNFFQKIDLLLVDFKLEMGLNNAGELLVADEISPDSCRLWDQRSDDPEQRILDKDRFRQDLGGVVEAYGEILKRIQGNP</sequence>
<proteinExistence type="inferred from homology"/>